<feature type="chain" id="PRO_0000147992" description="Phosphoglucosamine mutase">
    <location>
        <begin position="1"/>
        <end position="437"/>
    </location>
</feature>
<feature type="active site" description="Phosphoserine intermediate" evidence="1">
    <location>
        <position position="101"/>
    </location>
</feature>
<feature type="binding site" description="via phosphate group" evidence="1">
    <location>
        <position position="101"/>
    </location>
    <ligand>
        <name>Mg(2+)</name>
        <dbReference type="ChEBI" id="CHEBI:18420"/>
    </ligand>
</feature>
<feature type="binding site" evidence="1">
    <location>
        <position position="234"/>
    </location>
    <ligand>
        <name>Mg(2+)</name>
        <dbReference type="ChEBI" id="CHEBI:18420"/>
    </ligand>
</feature>
<feature type="binding site" evidence="1">
    <location>
        <position position="236"/>
    </location>
    <ligand>
        <name>Mg(2+)</name>
        <dbReference type="ChEBI" id="CHEBI:18420"/>
    </ligand>
</feature>
<feature type="binding site" evidence="1">
    <location>
        <position position="238"/>
    </location>
    <ligand>
        <name>Mg(2+)</name>
        <dbReference type="ChEBI" id="CHEBI:18420"/>
    </ligand>
</feature>
<feature type="modified residue" description="Phosphoserine" evidence="1">
    <location>
        <position position="101"/>
    </location>
</feature>
<proteinExistence type="inferred from homology"/>
<accession>Q72JS7</accession>
<accession>Q846D2</accession>
<comment type="function">
    <text evidence="1">Catalyzes the conversion of glucosamine-6-phosphate to glucosamine-1-phosphate.</text>
</comment>
<comment type="catalytic activity">
    <reaction evidence="1">
        <text>alpha-D-glucosamine 1-phosphate = D-glucosamine 6-phosphate</text>
        <dbReference type="Rhea" id="RHEA:23424"/>
        <dbReference type="ChEBI" id="CHEBI:58516"/>
        <dbReference type="ChEBI" id="CHEBI:58725"/>
        <dbReference type="EC" id="5.4.2.10"/>
    </reaction>
</comment>
<comment type="cofactor">
    <cofactor evidence="1">
        <name>Mg(2+)</name>
        <dbReference type="ChEBI" id="CHEBI:18420"/>
    </cofactor>
    <text evidence="1">Binds 1 Mg(2+) ion per subunit.</text>
</comment>
<comment type="PTM">
    <text evidence="1">Activated by phosphorylation.</text>
</comment>
<comment type="similarity">
    <text evidence="1">Belongs to the phosphohexose mutase family.</text>
</comment>
<organism>
    <name type="scientific">Thermus thermophilus (strain ATCC BAA-163 / DSM 7039 / HB27)</name>
    <dbReference type="NCBI Taxonomy" id="262724"/>
    <lineage>
        <taxon>Bacteria</taxon>
        <taxon>Thermotogati</taxon>
        <taxon>Deinococcota</taxon>
        <taxon>Deinococci</taxon>
        <taxon>Thermales</taxon>
        <taxon>Thermaceae</taxon>
        <taxon>Thermus</taxon>
    </lineage>
</organism>
<reference key="1">
    <citation type="journal article" date="2003" name="Appl. Environ. Microbiol.">
        <title>The bacterium Thermus thermophilus, like hyperthermophilic archaea, uses a two-step pathway for the synthesis of mannosylglycerate.</title>
        <authorList>
            <person name="Empadinhas N."/>
            <person name="Albuquerque L."/>
            <person name="Henne A."/>
            <person name="Santos H."/>
            <person name="da Costa M.S."/>
        </authorList>
    </citation>
    <scope>NUCLEOTIDE SEQUENCE [GENOMIC DNA]</scope>
</reference>
<reference key="2">
    <citation type="journal article" date="2004" name="Nat. Biotechnol.">
        <title>The genome sequence of the extreme thermophile Thermus thermophilus.</title>
        <authorList>
            <person name="Henne A."/>
            <person name="Brueggemann H."/>
            <person name="Raasch C."/>
            <person name="Wiezer A."/>
            <person name="Hartsch T."/>
            <person name="Liesegang H."/>
            <person name="Johann A."/>
            <person name="Lienard T."/>
            <person name="Gohl O."/>
            <person name="Martinez-Arias R."/>
            <person name="Jacobi C."/>
            <person name="Starkuviene V."/>
            <person name="Schlenczeck S."/>
            <person name="Dencker S."/>
            <person name="Huber R."/>
            <person name="Klenk H.-P."/>
            <person name="Kramer W."/>
            <person name="Merkl R."/>
            <person name="Gottschalk G."/>
            <person name="Fritz H.-J."/>
        </authorList>
    </citation>
    <scope>NUCLEOTIDE SEQUENCE [LARGE SCALE GENOMIC DNA]</scope>
    <source>
        <strain>ATCC BAA-163 / DSM 7039 / HB27</strain>
    </source>
</reference>
<protein>
    <recommendedName>
        <fullName evidence="1">Phosphoglucosamine mutase</fullName>
        <ecNumber evidence="1">5.4.2.10</ecNumber>
    </recommendedName>
</protein>
<sequence>MRRYFGTDGVRGEAGKPPLTPEFVLKLGQAAGAYFRTQEKRPVVLLAKDTRESSDLLEAALAAGLMSQGVRVEHLGVLPTPGVAHLTKALKATAGAVISASHNPYQDNGIKFFGPTGEKLPDEAEEEIERLLLEDHPTRGIGTVGDFREAERMYLDFLLAHAPDLTGLKVGLDLAHGATYRIGPKLFQKAGAEVMAFFNTPDGRNINRGCGSTHPEALSRFVVELGLDLGLAFDGDGDRVQFIDRKGRLFHGDHVLYLAALAFGEKGVVGTVMSNMALEVALKERGLAFHRAAVGDRYVLEKLKETGLALGGEPSGHVIFLRHHTTGDGLLTALLTLKALKALGGDLADWYEALPLYPQVLLNVRVSDKAKVMADPRLGEAVREAEARLGGRGRVNVRPSGTEPVIRVMVEAEEWAEEVARELAERVRALSQEAQAV</sequence>
<keyword id="KW-0413">Isomerase</keyword>
<keyword id="KW-0460">Magnesium</keyword>
<keyword id="KW-0479">Metal-binding</keyword>
<keyword id="KW-0597">Phosphoprotein</keyword>
<name>GLMM_THET2</name>
<gene>
    <name evidence="1" type="primary">glmM</name>
    <name type="ordered locus">TT_C0691</name>
</gene>
<dbReference type="EC" id="5.4.2.10" evidence="1"/>
<dbReference type="EMBL" id="AY194230">
    <property type="protein sequence ID" value="AAO67721.1"/>
    <property type="molecule type" value="Genomic_DNA"/>
</dbReference>
<dbReference type="EMBL" id="AE017221">
    <property type="protein sequence ID" value="AAS81039.1"/>
    <property type="molecule type" value="Genomic_DNA"/>
</dbReference>
<dbReference type="RefSeq" id="WP_011173133.1">
    <property type="nucleotide sequence ID" value="NC_005835.1"/>
</dbReference>
<dbReference type="SMR" id="Q72JS7"/>
<dbReference type="KEGG" id="tth:TT_C0691"/>
<dbReference type="eggNOG" id="COG1109">
    <property type="taxonomic scope" value="Bacteria"/>
</dbReference>
<dbReference type="HOGENOM" id="CLU_016950_7_0_0"/>
<dbReference type="OrthoDB" id="9806956at2"/>
<dbReference type="Proteomes" id="UP000000592">
    <property type="component" value="Chromosome"/>
</dbReference>
<dbReference type="GO" id="GO:0005829">
    <property type="term" value="C:cytosol"/>
    <property type="evidence" value="ECO:0007669"/>
    <property type="project" value="TreeGrafter"/>
</dbReference>
<dbReference type="GO" id="GO:0000287">
    <property type="term" value="F:magnesium ion binding"/>
    <property type="evidence" value="ECO:0007669"/>
    <property type="project" value="UniProtKB-UniRule"/>
</dbReference>
<dbReference type="GO" id="GO:0008966">
    <property type="term" value="F:phosphoglucosamine mutase activity"/>
    <property type="evidence" value="ECO:0007669"/>
    <property type="project" value="UniProtKB-UniRule"/>
</dbReference>
<dbReference type="GO" id="GO:0004615">
    <property type="term" value="F:phosphomannomutase activity"/>
    <property type="evidence" value="ECO:0007669"/>
    <property type="project" value="TreeGrafter"/>
</dbReference>
<dbReference type="GO" id="GO:0005975">
    <property type="term" value="P:carbohydrate metabolic process"/>
    <property type="evidence" value="ECO:0007669"/>
    <property type="project" value="InterPro"/>
</dbReference>
<dbReference type="GO" id="GO:0009252">
    <property type="term" value="P:peptidoglycan biosynthetic process"/>
    <property type="evidence" value="ECO:0007669"/>
    <property type="project" value="TreeGrafter"/>
</dbReference>
<dbReference type="GO" id="GO:0006048">
    <property type="term" value="P:UDP-N-acetylglucosamine biosynthetic process"/>
    <property type="evidence" value="ECO:0007669"/>
    <property type="project" value="TreeGrafter"/>
</dbReference>
<dbReference type="CDD" id="cd05802">
    <property type="entry name" value="GlmM"/>
    <property type="match status" value="1"/>
</dbReference>
<dbReference type="FunFam" id="3.30.310.50:FF:000001">
    <property type="entry name" value="Phosphoglucosamine mutase"/>
    <property type="match status" value="1"/>
</dbReference>
<dbReference type="FunFam" id="3.40.120.10:FF:000001">
    <property type="entry name" value="Phosphoglucosamine mutase"/>
    <property type="match status" value="1"/>
</dbReference>
<dbReference type="FunFam" id="3.40.120.10:FF:000002">
    <property type="entry name" value="Phosphoglucosamine mutase"/>
    <property type="match status" value="1"/>
</dbReference>
<dbReference type="Gene3D" id="3.40.120.10">
    <property type="entry name" value="Alpha-D-Glucose-1,6-Bisphosphate, subunit A, domain 3"/>
    <property type="match status" value="3"/>
</dbReference>
<dbReference type="Gene3D" id="3.30.310.50">
    <property type="entry name" value="Alpha-D-phosphohexomutase, C-terminal domain"/>
    <property type="match status" value="1"/>
</dbReference>
<dbReference type="HAMAP" id="MF_01554_B">
    <property type="entry name" value="GlmM_B"/>
    <property type="match status" value="1"/>
</dbReference>
<dbReference type="InterPro" id="IPR005844">
    <property type="entry name" value="A-D-PHexomutase_a/b/a-I"/>
</dbReference>
<dbReference type="InterPro" id="IPR016055">
    <property type="entry name" value="A-D-PHexomutase_a/b/a-I/II/III"/>
</dbReference>
<dbReference type="InterPro" id="IPR005845">
    <property type="entry name" value="A-D-PHexomutase_a/b/a-II"/>
</dbReference>
<dbReference type="InterPro" id="IPR005846">
    <property type="entry name" value="A-D-PHexomutase_a/b/a-III"/>
</dbReference>
<dbReference type="InterPro" id="IPR005843">
    <property type="entry name" value="A-D-PHexomutase_C"/>
</dbReference>
<dbReference type="InterPro" id="IPR036900">
    <property type="entry name" value="A-D-PHexomutase_C_sf"/>
</dbReference>
<dbReference type="InterPro" id="IPR005841">
    <property type="entry name" value="Alpha-D-phosphohexomutase_SF"/>
</dbReference>
<dbReference type="InterPro" id="IPR006352">
    <property type="entry name" value="GlmM_bact"/>
</dbReference>
<dbReference type="InterPro" id="IPR050060">
    <property type="entry name" value="Phosphoglucosamine_mutase"/>
</dbReference>
<dbReference type="NCBIfam" id="TIGR01455">
    <property type="entry name" value="glmM"/>
    <property type="match status" value="1"/>
</dbReference>
<dbReference type="NCBIfam" id="NF008139">
    <property type="entry name" value="PRK10887.1"/>
    <property type="match status" value="1"/>
</dbReference>
<dbReference type="PANTHER" id="PTHR42946:SF1">
    <property type="entry name" value="PHOSPHOGLUCOMUTASE (ALPHA-D-GLUCOSE-1,6-BISPHOSPHATE-DEPENDENT)"/>
    <property type="match status" value="1"/>
</dbReference>
<dbReference type="PANTHER" id="PTHR42946">
    <property type="entry name" value="PHOSPHOHEXOSE MUTASE"/>
    <property type="match status" value="1"/>
</dbReference>
<dbReference type="Pfam" id="PF02878">
    <property type="entry name" value="PGM_PMM_I"/>
    <property type="match status" value="1"/>
</dbReference>
<dbReference type="Pfam" id="PF02879">
    <property type="entry name" value="PGM_PMM_II"/>
    <property type="match status" value="1"/>
</dbReference>
<dbReference type="Pfam" id="PF02880">
    <property type="entry name" value="PGM_PMM_III"/>
    <property type="match status" value="1"/>
</dbReference>
<dbReference type="Pfam" id="PF00408">
    <property type="entry name" value="PGM_PMM_IV"/>
    <property type="match status" value="1"/>
</dbReference>
<dbReference type="PRINTS" id="PR00509">
    <property type="entry name" value="PGMPMM"/>
</dbReference>
<dbReference type="SUPFAM" id="SSF55957">
    <property type="entry name" value="Phosphoglucomutase, C-terminal domain"/>
    <property type="match status" value="1"/>
</dbReference>
<dbReference type="SUPFAM" id="SSF53738">
    <property type="entry name" value="Phosphoglucomutase, first 3 domains"/>
    <property type="match status" value="3"/>
</dbReference>
<evidence type="ECO:0000255" key="1">
    <source>
        <dbReference type="HAMAP-Rule" id="MF_01554"/>
    </source>
</evidence>